<proteinExistence type="inferred from homology"/>
<protein>
    <recommendedName>
        <fullName evidence="1">Aspartyl/glutamyl-tRNA(Asn/Gln) amidotransferase subunit C</fullName>
        <shortName evidence="1">Asp/Glu-ADT subunit C</shortName>
        <ecNumber evidence="1">6.3.5.-</ecNumber>
    </recommendedName>
</protein>
<gene>
    <name evidence="1" type="primary">gatC</name>
    <name type="ordered locus">EF_0724</name>
</gene>
<comment type="function">
    <text evidence="1">Allows the formation of correctly charged Asn-tRNA(Asn) or Gln-tRNA(Gln) through the transamidation of misacylated Asp-tRNA(Asn) or Glu-tRNA(Gln) in organisms which lack either or both of asparaginyl-tRNA or glutaminyl-tRNA synthetases. The reaction takes place in the presence of glutamine and ATP through an activated phospho-Asp-tRNA(Asn) or phospho-Glu-tRNA(Gln).</text>
</comment>
<comment type="catalytic activity">
    <reaction evidence="1">
        <text>L-glutamyl-tRNA(Gln) + L-glutamine + ATP + H2O = L-glutaminyl-tRNA(Gln) + L-glutamate + ADP + phosphate + H(+)</text>
        <dbReference type="Rhea" id="RHEA:17521"/>
        <dbReference type="Rhea" id="RHEA-COMP:9681"/>
        <dbReference type="Rhea" id="RHEA-COMP:9684"/>
        <dbReference type="ChEBI" id="CHEBI:15377"/>
        <dbReference type="ChEBI" id="CHEBI:15378"/>
        <dbReference type="ChEBI" id="CHEBI:29985"/>
        <dbReference type="ChEBI" id="CHEBI:30616"/>
        <dbReference type="ChEBI" id="CHEBI:43474"/>
        <dbReference type="ChEBI" id="CHEBI:58359"/>
        <dbReference type="ChEBI" id="CHEBI:78520"/>
        <dbReference type="ChEBI" id="CHEBI:78521"/>
        <dbReference type="ChEBI" id="CHEBI:456216"/>
    </reaction>
</comment>
<comment type="catalytic activity">
    <reaction evidence="1">
        <text>L-aspartyl-tRNA(Asn) + L-glutamine + ATP + H2O = L-asparaginyl-tRNA(Asn) + L-glutamate + ADP + phosphate + 2 H(+)</text>
        <dbReference type="Rhea" id="RHEA:14513"/>
        <dbReference type="Rhea" id="RHEA-COMP:9674"/>
        <dbReference type="Rhea" id="RHEA-COMP:9677"/>
        <dbReference type="ChEBI" id="CHEBI:15377"/>
        <dbReference type="ChEBI" id="CHEBI:15378"/>
        <dbReference type="ChEBI" id="CHEBI:29985"/>
        <dbReference type="ChEBI" id="CHEBI:30616"/>
        <dbReference type="ChEBI" id="CHEBI:43474"/>
        <dbReference type="ChEBI" id="CHEBI:58359"/>
        <dbReference type="ChEBI" id="CHEBI:78515"/>
        <dbReference type="ChEBI" id="CHEBI:78516"/>
        <dbReference type="ChEBI" id="CHEBI:456216"/>
    </reaction>
</comment>
<comment type="subunit">
    <text evidence="1">Heterotrimer of A, B and C subunits.</text>
</comment>
<comment type="similarity">
    <text evidence="1">Belongs to the GatC family.</text>
</comment>
<organism>
    <name type="scientific">Enterococcus faecalis (strain ATCC 700802 / V583)</name>
    <dbReference type="NCBI Taxonomy" id="226185"/>
    <lineage>
        <taxon>Bacteria</taxon>
        <taxon>Bacillati</taxon>
        <taxon>Bacillota</taxon>
        <taxon>Bacilli</taxon>
        <taxon>Lactobacillales</taxon>
        <taxon>Enterococcaceae</taxon>
        <taxon>Enterococcus</taxon>
    </lineage>
</organism>
<evidence type="ECO:0000255" key="1">
    <source>
        <dbReference type="HAMAP-Rule" id="MF_00122"/>
    </source>
</evidence>
<accession>Q837V4</accession>
<reference key="1">
    <citation type="journal article" date="2003" name="Science">
        <title>Role of mobile DNA in the evolution of vancomycin-resistant Enterococcus faecalis.</title>
        <authorList>
            <person name="Paulsen I.T."/>
            <person name="Banerjei L."/>
            <person name="Myers G.S.A."/>
            <person name="Nelson K.E."/>
            <person name="Seshadri R."/>
            <person name="Read T.D."/>
            <person name="Fouts D.E."/>
            <person name="Eisen J.A."/>
            <person name="Gill S.R."/>
            <person name="Heidelberg J.F."/>
            <person name="Tettelin H."/>
            <person name="Dodson R.J."/>
            <person name="Umayam L.A."/>
            <person name="Brinkac L.M."/>
            <person name="Beanan M.J."/>
            <person name="Daugherty S.C."/>
            <person name="DeBoy R.T."/>
            <person name="Durkin S.A."/>
            <person name="Kolonay J.F."/>
            <person name="Madupu R."/>
            <person name="Nelson W.C."/>
            <person name="Vamathevan J.J."/>
            <person name="Tran B."/>
            <person name="Upton J."/>
            <person name="Hansen T."/>
            <person name="Shetty J."/>
            <person name="Khouri H.M."/>
            <person name="Utterback T.R."/>
            <person name="Radune D."/>
            <person name="Ketchum K.A."/>
            <person name="Dougherty B.A."/>
            <person name="Fraser C.M."/>
        </authorList>
    </citation>
    <scope>NUCLEOTIDE SEQUENCE [LARGE SCALE GENOMIC DNA]</scope>
    <source>
        <strain>ATCC 700802 / V583</strain>
    </source>
</reference>
<feature type="chain" id="PRO_0000105298" description="Aspartyl/glutamyl-tRNA(Asn/Gln) amidotransferase subunit C">
    <location>
        <begin position="1"/>
        <end position="101"/>
    </location>
</feature>
<dbReference type="EC" id="6.3.5.-" evidence="1"/>
<dbReference type="EMBL" id="AE016830">
    <property type="protein sequence ID" value="AAO80544.1"/>
    <property type="molecule type" value="Genomic_DNA"/>
</dbReference>
<dbReference type="RefSeq" id="NP_814474.1">
    <property type="nucleotide sequence ID" value="NC_004668.1"/>
</dbReference>
<dbReference type="RefSeq" id="WP_002355569.1">
    <property type="nucleotide sequence ID" value="NZ_KE136527.1"/>
</dbReference>
<dbReference type="SMR" id="Q837V4"/>
<dbReference type="STRING" id="226185.EF_0724"/>
<dbReference type="DNASU" id="1199623"/>
<dbReference type="EnsemblBacteria" id="AAO80544">
    <property type="protein sequence ID" value="AAO80544"/>
    <property type="gene ID" value="EF_0724"/>
</dbReference>
<dbReference type="KEGG" id="efa:EF0724"/>
<dbReference type="PATRIC" id="fig|226185.45.peg.2665"/>
<dbReference type="eggNOG" id="COG0721">
    <property type="taxonomic scope" value="Bacteria"/>
</dbReference>
<dbReference type="HOGENOM" id="CLU_105899_1_2_9"/>
<dbReference type="Proteomes" id="UP000001415">
    <property type="component" value="Chromosome"/>
</dbReference>
<dbReference type="GO" id="GO:0050566">
    <property type="term" value="F:asparaginyl-tRNA synthase (glutamine-hydrolyzing) activity"/>
    <property type="evidence" value="ECO:0007669"/>
    <property type="project" value="RHEA"/>
</dbReference>
<dbReference type="GO" id="GO:0005524">
    <property type="term" value="F:ATP binding"/>
    <property type="evidence" value="ECO:0007669"/>
    <property type="project" value="UniProtKB-KW"/>
</dbReference>
<dbReference type="GO" id="GO:0050567">
    <property type="term" value="F:glutaminyl-tRNA synthase (glutamine-hydrolyzing) activity"/>
    <property type="evidence" value="ECO:0007669"/>
    <property type="project" value="UniProtKB-UniRule"/>
</dbReference>
<dbReference type="GO" id="GO:0070681">
    <property type="term" value="P:glutaminyl-tRNAGln biosynthesis via transamidation"/>
    <property type="evidence" value="ECO:0007669"/>
    <property type="project" value="TreeGrafter"/>
</dbReference>
<dbReference type="GO" id="GO:0006450">
    <property type="term" value="P:regulation of translational fidelity"/>
    <property type="evidence" value="ECO:0007669"/>
    <property type="project" value="InterPro"/>
</dbReference>
<dbReference type="GO" id="GO:0006412">
    <property type="term" value="P:translation"/>
    <property type="evidence" value="ECO:0007669"/>
    <property type="project" value="UniProtKB-UniRule"/>
</dbReference>
<dbReference type="Gene3D" id="1.10.20.60">
    <property type="entry name" value="Glu-tRNAGln amidotransferase C subunit, N-terminal domain"/>
    <property type="match status" value="1"/>
</dbReference>
<dbReference type="HAMAP" id="MF_00122">
    <property type="entry name" value="GatC"/>
    <property type="match status" value="1"/>
</dbReference>
<dbReference type="InterPro" id="IPR036113">
    <property type="entry name" value="Asp/Glu-ADT_sf_sub_c"/>
</dbReference>
<dbReference type="InterPro" id="IPR003837">
    <property type="entry name" value="GatC"/>
</dbReference>
<dbReference type="NCBIfam" id="TIGR00135">
    <property type="entry name" value="gatC"/>
    <property type="match status" value="1"/>
</dbReference>
<dbReference type="PANTHER" id="PTHR15004">
    <property type="entry name" value="GLUTAMYL-TRNA(GLN) AMIDOTRANSFERASE SUBUNIT C, MITOCHONDRIAL"/>
    <property type="match status" value="1"/>
</dbReference>
<dbReference type="PANTHER" id="PTHR15004:SF0">
    <property type="entry name" value="GLUTAMYL-TRNA(GLN) AMIDOTRANSFERASE SUBUNIT C, MITOCHONDRIAL"/>
    <property type="match status" value="1"/>
</dbReference>
<dbReference type="Pfam" id="PF02686">
    <property type="entry name" value="GatC"/>
    <property type="match status" value="1"/>
</dbReference>
<dbReference type="SUPFAM" id="SSF141000">
    <property type="entry name" value="Glu-tRNAGln amidotransferase C subunit"/>
    <property type="match status" value="1"/>
</dbReference>
<sequence length="101" mass="11216">MAITEEQVKHVAKLSKLSFSEEELADFTNQLDKIIDMVELLEEVDTTGVPFTSNVNESINVMREDVATPGMDRKELMRNVPESENGYIKVPAIMDNGEAGA</sequence>
<keyword id="KW-0067">ATP-binding</keyword>
<keyword id="KW-0436">Ligase</keyword>
<keyword id="KW-0547">Nucleotide-binding</keyword>
<keyword id="KW-0648">Protein biosynthesis</keyword>
<keyword id="KW-1185">Reference proteome</keyword>
<name>GATC_ENTFA</name>